<sequence>MRVSDFNFDLPDELIARYPKTDRVSCRLLQLNGENGEIFHRTFSDVLDLIDEGDLLIFNNTRVIPARMFGRKASGGKIEVLVERMLDEHRFLAHIRSSKSPKEGAELFLGEDKLGENNGIKAVMKARHSSLFEVELSDKSTALLDVLQTIGHMPLPPYIDRPDEEADKECYQTVYSKVPGAVAAPTAGLHFDENLLEKLKAKGVNFEFVTLHVGAGTFQPVRVENIEDHVMHAEYVEVSQEVCNAIIATKKAGKRVIAVGTTSVRSIESAALSAEEFGNPDLIEPYFSDTSIFIYPGKKFRVVDCLITNFHLPESTLIMLVSAFAGYKNTMNAYKQAVQEKYRFFSYGDAMFINKNSNVRELE</sequence>
<gene>
    <name evidence="1" type="primary">queA</name>
    <name type="ordered locus">CGSHiEE_01850</name>
</gene>
<proteinExistence type="inferred from homology"/>
<feature type="chain" id="PRO_1000015218" description="S-adenosylmethionine:tRNA ribosyltransferase-isomerase">
    <location>
        <begin position="1"/>
        <end position="363"/>
    </location>
</feature>
<organism>
    <name type="scientific">Haemophilus influenzae (strain PittEE)</name>
    <dbReference type="NCBI Taxonomy" id="374930"/>
    <lineage>
        <taxon>Bacteria</taxon>
        <taxon>Pseudomonadati</taxon>
        <taxon>Pseudomonadota</taxon>
        <taxon>Gammaproteobacteria</taxon>
        <taxon>Pasteurellales</taxon>
        <taxon>Pasteurellaceae</taxon>
        <taxon>Haemophilus</taxon>
    </lineage>
</organism>
<keyword id="KW-0963">Cytoplasm</keyword>
<keyword id="KW-0671">Queuosine biosynthesis</keyword>
<keyword id="KW-0949">S-adenosyl-L-methionine</keyword>
<keyword id="KW-0808">Transferase</keyword>
<comment type="function">
    <text evidence="1">Transfers and isomerizes the ribose moiety from AdoMet to the 7-aminomethyl group of 7-deazaguanine (preQ1-tRNA) to give epoxyqueuosine (oQ-tRNA).</text>
</comment>
<comment type="catalytic activity">
    <reaction evidence="1">
        <text>7-aminomethyl-7-carbaguanosine(34) in tRNA + S-adenosyl-L-methionine = epoxyqueuosine(34) in tRNA + adenine + L-methionine + 2 H(+)</text>
        <dbReference type="Rhea" id="RHEA:32155"/>
        <dbReference type="Rhea" id="RHEA-COMP:10342"/>
        <dbReference type="Rhea" id="RHEA-COMP:18582"/>
        <dbReference type="ChEBI" id="CHEBI:15378"/>
        <dbReference type="ChEBI" id="CHEBI:16708"/>
        <dbReference type="ChEBI" id="CHEBI:57844"/>
        <dbReference type="ChEBI" id="CHEBI:59789"/>
        <dbReference type="ChEBI" id="CHEBI:82833"/>
        <dbReference type="ChEBI" id="CHEBI:194443"/>
        <dbReference type="EC" id="2.4.99.17"/>
    </reaction>
</comment>
<comment type="pathway">
    <text evidence="1">tRNA modification; tRNA-queuosine biosynthesis.</text>
</comment>
<comment type="subunit">
    <text evidence="1">Monomer.</text>
</comment>
<comment type="subcellular location">
    <subcellularLocation>
        <location evidence="1">Cytoplasm</location>
    </subcellularLocation>
</comment>
<comment type="similarity">
    <text evidence="1">Belongs to the QueA family.</text>
</comment>
<reference key="1">
    <citation type="journal article" date="2007" name="Genome Biol.">
        <title>Characterization and modeling of the Haemophilus influenzae core and supragenomes based on the complete genomic sequences of Rd and 12 clinical nontypeable strains.</title>
        <authorList>
            <person name="Hogg J.S."/>
            <person name="Hu F.Z."/>
            <person name="Janto B."/>
            <person name="Boissy R."/>
            <person name="Hayes J."/>
            <person name="Keefe R."/>
            <person name="Post J.C."/>
            <person name="Ehrlich G.D."/>
        </authorList>
    </citation>
    <scope>NUCLEOTIDE SEQUENCE [LARGE SCALE GENOMIC DNA]</scope>
    <source>
        <strain>PittEE</strain>
    </source>
</reference>
<dbReference type="EC" id="2.4.99.17" evidence="1"/>
<dbReference type="EMBL" id="CP000671">
    <property type="protein sequence ID" value="ABQ97843.1"/>
    <property type="molecule type" value="Genomic_DNA"/>
</dbReference>
<dbReference type="SMR" id="A5UAP2"/>
<dbReference type="KEGG" id="hip:CGSHiEE_01850"/>
<dbReference type="HOGENOM" id="CLU_039110_1_0_6"/>
<dbReference type="UniPathway" id="UPA00392"/>
<dbReference type="GO" id="GO:0005737">
    <property type="term" value="C:cytoplasm"/>
    <property type="evidence" value="ECO:0007669"/>
    <property type="project" value="UniProtKB-SubCell"/>
</dbReference>
<dbReference type="GO" id="GO:0051075">
    <property type="term" value="F:S-adenosylmethionine:tRNA ribosyltransferase-isomerase activity"/>
    <property type="evidence" value="ECO:0007669"/>
    <property type="project" value="UniProtKB-EC"/>
</dbReference>
<dbReference type="GO" id="GO:0008616">
    <property type="term" value="P:queuosine biosynthetic process"/>
    <property type="evidence" value="ECO:0007669"/>
    <property type="project" value="UniProtKB-UniRule"/>
</dbReference>
<dbReference type="GO" id="GO:0002099">
    <property type="term" value="P:tRNA wobble guanine modification"/>
    <property type="evidence" value="ECO:0007669"/>
    <property type="project" value="TreeGrafter"/>
</dbReference>
<dbReference type="FunFam" id="2.40.10.240:FF:000001">
    <property type="entry name" value="S-adenosylmethionine:tRNA ribosyltransferase-isomerase"/>
    <property type="match status" value="1"/>
</dbReference>
<dbReference type="FunFam" id="3.40.1780.10:FF:000001">
    <property type="entry name" value="S-adenosylmethionine:tRNA ribosyltransferase-isomerase"/>
    <property type="match status" value="1"/>
</dbReference>
<dbReference type="Gene3D" id="2.40.10.240">
    <property type="entry name" value="QueA-like"/>
    <property type="match status" value="1"/>
</dbReference>
<dbReference type="Gene3D" id="3.40.1780.10">
    <property type="entry name" value="QueA-like"/>
    <property type="match status" value="1"/>
</dbReference>
<dbReference type="HAMAP" id="MF_00113">
    <property type="entry name" value="QueA"/>
    <property type="match status" value="1"/>
</dbReference>
<dbReference type="InterPro" id="IPR003699">
    <property type="entry name" value="QueA"/>
</dbReference>
<dbReference type="InterPro" id="IPR042118">
    <property type="entry name" value="QueA_dom1"/>
</dbReference>
<dbReference type="InterPro" id="IPR042119">
    <property type="entry name" value="QueA_dom2"/>
</dbReference>
<dbReference type="InterPro" id="IPR036100">
    <property type="entry name" value="QueA_sf"/>
</dbReference>
<dbReference type="NCBIfam" id="NF001140">
    <property type="entry name" value="PRK00147.1"/>
    <property type="match status" value="1"/>
</dbReference>
<dbReference type="NCBIfam" id="TIGR00113">
    <property type="entry name" value="queA"/>
    <property type="match status" value="1"/>
</dbReference>
<dbReference type="PANTHER" id="PTHR30307">
    <property type="entry name" value="S-ADENOSYLMETHIONINE:TRNA RIBOSYLTRANSFERASE-ISOMERASE"/>
    <property type="match status" value="1"/>
</dbReference>
<dbReference type="PANTHER" id="PTHR30307:SF0">
    <property type="entry name" value="S-ADENOSYLMETHIONINE:TRNA RIBOSYLTRANSFERASE-ISOMERASE"/>
    <property type="match status" value="1"/>
</dbReference>
<dbReference type="Pfam" id="PF02547">
    <property type="entry name" value="Queuosine_synth"/>
    <property type="match status" value="1"/>
</dbReference>
<dbReference type="SUPFAM" id="SSF111337">
    <property type="entry name" value="QueA-like"/>
    <property type="match status" value="1"/>
</dbReference>
<evidence type="ECO:0000255" key="1">
    <source>
        <dbReference type="HAMAP-Rule" id="MF_00113"/>
    </source>
</evidence>
<accession>A5UAP2</accession>
<name>QUEA_HAEIE</name>
<protein>
    <recommendedName>
        <fullName evidence="1">S-adenosylmethionine:tRNA ribosyltransferase-isomerase</fullName>
        <ecNumber evidence="1">2.4.99.17</ecNumber>
    </recommendedName>
    <alternativeName>
        <fullName evidence="1">Queuosine biosynthesis protein QueA</fullName>
    </alternativeName>
</protein>